<feature type="chain" id="PRO_1000123683" description="3-dehydroquinate dehydratase">
    <location>
        <begin position="1"/>
        <end position="157"/>
    </location>
</feature>
<feature type="active site" description="Proton acceptor" evidence="1">
    <location>
        <position position="24"/>
    </location>
</feature>
<feature type="active site" description="Proton donor" evidence="1">
    <location>
        <position position="101"/>
    </location>
</feature>
<feature type="binding site" evidence="1">
    <location>
        <position position="75"/>
    </location>
    <ligand>
        <name>substrate</name>
    </ligand>
</feature>
<feature type="binding site" evidence="1">
    <location>
        <position position="81"/>
    </location>
    <ligand>
        <name>substrate</name>
    </ligand>
</feature>
<feature type="binding site" evidence="1">
    <location>
        <position position="88"/>
    </location>
    <ligand>
        <name>substrate</name>
    </ligand>
</feature>
<feature type="binding site" evidence="1">
    <location>
        <begin position="102"/>
        <end position="103"/>
    </location>
    <ligand>
        <name>substrate</name>
    </ligand>
</feature>
<feature type="binding site" evidence="1">
    <location>
        <position position="112"/>
    </location>
    <ligand>
        <name>substrate</name>
    </ligand>
</feature>
<feature type="site" description="Transition state stabilizer" evidence="1">
    <location>
        <position position="19"/>
    </location>
</feature>
<name>AROQ_BRUMB</name>
<evidence type="ECO:0000255" key="1">
    <source>
        <dbReference type="HAMAP-Rule" id="MF_00169"/>
    </source>
</evidence>
<gene>
    <name evidence="1" type="primary">aroQ</name>
    <name type="ordered locus">BMEA_A0947</name>
</gene>
<comment type="function">
    <text evidence="1">Catalyzes a trans-dehydration via an enolate intermediate.</text>
</comment>
<comment type="catalytic activity">
    <reaction evidence="1">
        <text>3-dehydroquinate = 3-dehydroshikimate + H2O</text>
        <dbReference type="Rhea" id="RHEA:21096"/>
        <dbReference type="ChEBI" id="CHEBI:15377"/>
        <dbReference type="ChEBI" id="CHEBI:16630"/>
        <dbReference type="ChEBI" id="CHEBI:32364"/>
        <dbReference type="EC" id="4.2.1.10"/>
    </reaction>
</comment>
<comment type="pathway">
    <text evidence="1">Metabolic intermediate biosynthesis; chorismate biosynthesis; chorismate from D-erythrose 4-phosphate and phosphoenolpyruvate: step 3/7.</text>
</comment>
<comment type="subunit">
    <text evidence="1">Homododecamer.</text>
</comment>
<comment type="similarity">
    <text evidence="1">Belongs to the type-II 3-dehydroquinase family.</text>
</comment>
<proteinExistence type="inferred from homology"/>
<protein>
    <recommendedName>
        <fullName evidence="1">3-dehydroquinate dehydratase</fullName>
        <shortName evidence="1">3-dehydroquinase</shortName>
        <ecNumber evidence="1">4.2.1.10</ecNumber>
    </recommendedName>
    <alternativeName>
        <fullName evidence="1">Type II DHQase</fullName>
    </alternativeName>
</protein>
<accession>C0RIP1</accession>
<reference key="1">
    <citation type="submission" date="2009-03" db="EMBL/GenBank/DDBJ databases">
        <title>Brucella melitensis ATCC 23457 whole genome shotgun sequencing project.</title>
        <authorList>
            <person name="Setubal J.C."/>
            <person name="Boyle S."/>
            <person name="Crasta O.R."/>
            <person name="Gillespie J.J."/>
            <person name="Kenyon R.W."/>
            <person name="Lu J."/>
            <person name="Mane S."/>
            <person name="Nagrani S."/>
            <person name="Shallom J.M."/>
            <person name="Shallom S."/>
            <person name="Shukla M."/>
            <person name="Snyder E.E."/>
            <person name="Sobral B.W."/>
            <person name="Wattam A.R."/>
            <person name="Will R."/>
            <person name="Williams K."/>
            <person name="Yoo H."/>
            <person name="Munk C."/>
            <person name="Tapia R."/>
            <person name="Han C."/>
            <person name="Detter J.C."/>
            <person name="Bruce D."/>
            <person name="Brettin T.S."/>
        </authorList>
    </citation>
    <scope>NUCLEOTIDE SEQUENCE [LARGE SCALE GENOMIC DNA]</scope>
    <source>
        <strain>ATCC 23457</strain>
    </source>
</reference>
<organism>
    <name type="scientific">Brucella melitensis biotype 2 (strain ATCC 23457)</name>
    <dbReference type="NCBI Taxonomy" id="546272"/>
    <lineage>
        <taxon>Bacteria</taxon>
        <taxon>Pseudomonadati</taxon>
        <taxon>Pseudomonadota</taxon>
        <taxon>Alphaproteobacteria</taxon>
        <taxon>Hyphomicrobiales</taxon>
        <taxon>Brucellaceae</taxon>
        <taxon>Brucella/Ochrobactrum group</taxon>
        <taxon>Brucella</taxon>
    </lineage>
</organism>
<sequence>MTKTVFVLNGPNLNLLGKREPGIYGVATLDDIEASCKREAGQLELQIDFRQSNHEGDLVSWIQEAGEKNAYVLINPAAYSHTSVAIHDAIRSARVTVVEVHLSNIHAREAFRHHSHVSAVAKGVICGFGAEGYLLGLRALAAIAKEEENNGQSIKGA</sequence>
<keyword id="KW-0028">Amino-acid biosynthesis</keyword>
<keyword id="KW-0057">Aromatic amino acid biosynthesis</keyword>
<keyword id="KW-0456">Lyase</keyword>
<dbReference type="EC" id="4.2.1.10" evidence="1"/>
<dbReference type="EMBL" id="CP001488">
    <property type="protein sequence ID" value="ACO00699.1"/>
    <property type="molecule type" value="Genomic_DNA"/>
</dbReference>
<dbReference type="RefSeq" id="WP_002964037.1">
    <property type="nucleotide sequence ID" value="NC_012441.1"/>
</dbReference>
<dbReference type="SMR" id="C0RIP1"/>
<dbReference type="GeneID" id="97533798"/>
<dbReference type="KEGG" id="bmi:BMEA_A0947"/>
<dbReference type="HOGENOM" id="CLU_090968_1_0_5"/>
<dbReference type="UniPathway" id="UPA00053">
    <property type="reaction ID" value="UER00086"/>
</dbReference>
<dbReference type="Proteomes" id="UP000001748">
    <property type="component" value="Chromosome I"/>
</dbReference>
<dbReference type="GO" id="GO:0003855">
    <property type="term" value="F:3-dehydroquinate dehydratase activity"/>
    <property type="evidence" value="ECO:0007669"/>
    <property type="project" value="UniProtKB-UniRule"/>
</dbReference>
<dbReference type="GO" id="GO:0008652">
    <property type="term" value="P:amino acid biosynthetic process"/>
    <property type="evidence" value="ECO:0007669"/>
    <property type="project" value="UniProtKB-KW"/>
</dbReference>
<dbReference type="GO" id="GO:0009073">
    <property type="term" value="P:aromatic amino acid family biosynthetic process"/>
    <property type="evidence" value="ECO:0007669"/>
    <property type="project" value="UniProtKB-KW"/>
</dbReference>
<dbReference type="GO" id="GO:0009423">
    <property type="term" value="P:chorismate biosynthetic process"/>
    <property type="evidence" value="ECO:0007669"/>
    <property type="project" value="UniProtKB-UniRule"/>
</dbReference>
<dbReference type="GO" id="GO:0019631">
    <property type="term" value="P:quinate catabolic process"/>
    <property type="evidence" value="ECO:0007669"/>
    <property type="project" value="TreeGrafter"/>
</dbReference>
<dbReference type="CDD" id="cd00466">
    <property type="entry name" value="DHQase_II"/>
    <property type="match status" value="1"/>
</dbReference>
<dbReference type="Gene3D" id="3.40.50.9100">
    <property type="entry name" value="Dehydroquinase, class II"/>
    <property type="match status" value="1"/>
</dbReference>
<dbReference type="HAMAP" id="MF_00169">
    <property type="entry name" value="AroQ"/>
    <property type="match status" value="1"/>
</dbReference>
<dbReference type="InterPro" id="IPR001874">
    <property type="entry name" value="DHquinase_II"/>
</dbReference>
<dbReference type="InterPro" id="IPR018509">
    <property type="entry name" value="DHquinase_II_CS"/>
</dbReference>
<dbReference type="InterPro" id="IPR036441">
    <property type="entry name" value="DHquinase_II_sf"/>
</dbReference>
<dbReference type="NCBIfam" id="TIGR01088">
    <property type="entry name" value="aroQ"/>
    <property type="match status" value="1"/>
</dbReference>
<dbReference type="NCBIfam" id="NF003805">
    <property type="entry name" value="PRK05395.1-2"/>
    <property type="match status" value="1"/>
</dbReference>
<dbReference type="NCBIfam" id="NF003806">
    <property type="entry name" value="PRK05395.1-3"/>
    <property type="match status" value="1"/>
</dbReference>
<dbReference type="NCBIfam" id="NF003807">
    <property type="entry name" value="PRK05395.1-4"/>
    <property type="match status" value="1"/>
</dbReference>
<dbReference type="PANTHER" id="PTHR21272">
    <property type="entry name" value="CATABOLIC 3-DEHYDROQUINASE"/>
    <property type="match status" value="1"/>
</dbReference>
<dbReference type="PANTHER" id="PTHR21272:SF3">
    <property type="entry name" value="CATABOLIC 3-DEHYDROQUINASE"/>
    <property type="match status" value="1"/>
</dbReference>
<dbReference type="Pfam" id="PF01220">
    <property type="entry name" value="DHquinase_II"/>
    <property type="match status" value="1"/>
</dbReference>
<dbReference type="PIRSF" id="PIRSF001399">
    <property type="entry name" value="DHquinase_II"/>
    <property type="match status" value="1"/>
</dbReference>
<dbReference type="SUPFAM" id="SSF52304">
    <property type="entry name" value="Type II 3-dehydroquinate dehydratase"/>
    <property type="match status" value="1"/>
</dbReference>
<dbReference type="PROSITE" id="PS01029">
    <property type="entry name" value="DEHYDROQUINASE_II"/>
    <property type="match status" value="1"/>
</dbReference>